<evidence type="ECO:0000255" key="1">
    <source>
        <dbReference type="HAMAP-Rule" id="MF_00170"/>
    </source>
</evidence>
<gene>
    <name evidence="1" type="primary">rpiA</name>
    <name type="ordered locus">Shew185_3389</name>
</gene>
<keyword id="KW-0413">Isomerase</keyword>
<name>RPIA_SHEB8</name>
<comment type="function">
    <text evidence="1">Catalyzes the reversible conversion of ribose-5-phosphate to ribulose 5-phosphate.</text>
</comment>
<comment type="catalytic activity">
    <reaction evidence="1">
        <text>aldehydo-D-ribose 5-phosphate = D-ribulose 5-phosphate</text>
        <dbReference type="Rhea" id="RHEA:14657"/>
        <dbReference type="ChEBI" id="CHEBI:58121"/>
        <dbReference type="ChEBI" id="CHEBI:58273"/>
        <dbReference type="EC" id="5.3.1.6"/>
    </reaction>
</comment>
<comment type="pathway">
    <text evidence="1">Carbohydrate degradation; pentose phosphate pathway; D-ribose 5-phosphate from D-ribulose 5-phosphate (non-oxidative stage): step 1/1.</text>
</comment>
<comment type="subunit">
    <text evidence="1">Homodimer.</text>
</comment>
<comment type="similarity">
    <text evidence="1">Belongs to the ribose 5-phosphate isomerase family.</text>
</comment>
<organism>
    <name type="scientific">Shewanella baltica (strain OS185)</name>
    <dbReference type="NCBI Taxonomy" id="402882"/>
    <lineage>
        <taxon>Bacteria</taxon>
        <taxon>Pseudomonadati</taxon>
        <taxon>Pseudomonadota</taxon>
        <taxon>Gammaproteobacteria</taxon>
        <taxon>Alteromonadales</taxon>
        <taxon>Shewanellaceae</taxon>
        <taxon>Shewanella</taxon>
    </lineage>
</organism>
<feature type="chain" id="PRO_1000016988" description="Ribose-5-phosphate isomerase A">
    <location>
        <begin position="1"/>
        <end position="220"/>
    </location>
</feature>
<feature type="active site" description="Proton acceptor" evidence="1">
    <location>
        <position position="103"/>
    </location>
</feature>
<feature type="binding site" evidence="1">
    <location>
        <begin position="28"/>
        <end position="31"/>
    </location>
    <ligand>
        <name>substrate</name>
    </ligand>
</feature>
<feature type="binding site" evidence="1">
    <location>
        <begin position="81"/>
        <end position="84"/>
    </location>
    <ligand>
        <name>substrate</name>
    </ligand>
</feature>
<feature type="binding site" evidence="1">
    <location>
        <begin position="94"/>
        <end position="97"/>
    </location>
    <ligand>
        <name>substrate</name>
    </ligand>
</feature>
<feature type="binding site" evidence="1">
    <location>
        <position position="121"/>
    </location>
    <ligand>
        <name>substrate</name>
    </ligand>
</feature>
<dbReference type="EC" id="5.3.1.6" evidence="1"/>
<dbReference type="EMBL" id="CP000753">
    <property type="protein sequence ID" value="ABS09516.1"/>
    <property type="molecule type" value="Genomic_DNA"/>
</dbReference>
<dbReference type="RefSeq" id="WP_012090003.1">
    <property type="nucleotide sequence ID" value="NC_009665.1"/>
</dbReference>
<dbReference type="SMR" id="A6WRS7"/>
<dbReference type="KEGG" id="sbm:Shew185_3389"/>
<dbReference type="HOGENOM" id="CLU_056590_1_1_6"/>
<dbReference type="UniPathway" id="UPA00115">
    <property type="reaction ID" value="UER00412"/>
</dbReference>
<dbReference type="GO" id="GO:0005829">
    <property type="term" value="C:cytosol"/>
    <property type="evidence" value="ECO:0007669"/>
    <property type="project" value="TreeGrafter"/>
</dbReference>
<dbReference type="GO" id="GO:0004751">
    <property type="term" value="F:ribose-5-phosphate isomerase activity"/>
    <property type="evidence" value="ECO:0007669"/>
    <property type="project" value="UniProtKB-UniRule"/>
</dbReference>
<dbReference type="GO" id="GO:0006014">
    <property type="term" value="P:D-ribose metabolic process"/>
    <property type="evidence" value="ECO:0007669"/>
    <property type="project" value="TreeGrafter"/>
</dbReference>
<dbReference type="GO" id="GO:0009052">
    <property type="term" value="P:pentose-phosphate shunt, non-oxidative branch"/>
    <property type="evidence" value="ECO:0007669"/>
    <property type="project" value="UniProtKB-UniRule"/>
</dbReference>
<dbReference type="CDD" id="cd01398">
    <property type="entry name" value="RPI_A"/>
    <property type="match status" value="1"/>
</dbReference>
<dbReference type="FunFam" id="3.30.70.260:FF:000004">
    <property type="entry name" value="Ribose-5-phosphate isomerase A"/>
    <property type="match status" value="1"/>
</dbReference>
<dbReference type="FunFam" id="3.40.50.1360:FF:000001">
    <property type="entry name" value="Ribose-5-phosphate isomerase A"/>
    <property type="match status" value="1"/>
</dbReference>
<dbReference type="Gene3D" id="3.30.70.260">
    <property type="match status" value="1"/>
</dbReference>
<dbReference type="Gene3D" id="3.40.50.1360">
    <property type="match status" value="1"/>
</dbReference>
<dbReference type="HAMAP" id="MF_00170">
    <property type="entry name" value="Rib_5P_isom_A"/>
    <property type="match status" value="1"/>
</dbReference>
<dbReference type="InterPro" id="IPR037171">
    <property type="entry name" value="NagB/RpiA_transferase-like"/>
</dbReference>
<dbReference type="InterPro" id="IPR020672">
    <property type="entry name" value="Ribose5P_isomerase_typA_subgr"/>
</dbReference>
<dbReference type="InterPro" id="IPR004788">
    <property type="entry name" value="Ribose5P_isomerase_type_A"/>
</dbReference>
<dbReference type="NCBIfam" id="NF001924">
    <property type="entry name" value="PRK00702.1"/>
    <property type="match status" value="1"/>
</dbReference>
<dbReference type="NCBIfam" id="TIGR00021">
    <property type="entry name" value="rpiA"/>
    <property type="match status" value="1"/>
</dbReference>
<dbReference type="PANTHER" id="PTHR11934">
    <property type="entry name" value="RIBOSE-5-PHOSPHATE ISOMERASE"/>
    <property type="match status" value="1"/>
</dbReference>
<dbReference type="PANTHER" id="PTHR11934:SF0">
    <property type="entry name" value="RIBOSE-5-PHOSPHATE ISOMERASE"/>
    <property type="match status" value="1"/>
</dbReference>
<dbReference type="Pfam" id="PF06026">
    <property type="entry name" value="Rib_5-P_isom_A"/>
    <property type="match status" value="1"/>
</dbReference>
<dbReference type="SUPFAM" id="SSF75445">
    <property type="entry name" value="D-ribose-5-phosphate isomerase (RpiA), lid domain"/>
    <property type="match status" value="1"/>
</dbReference>
<dbReference type="SUPFAM" id="SSF100950">
    <property type="entry name" value="NagB/RpiA/CoA transferase-like"/>
    <property type="match status" value="1"/>
</dbReference>
<accession>A6WRS7</accession>
<sequence>MTQDEMKKAAGWAALKYVEKDSIVGVGTGSTVNHFIDALATMKADIEGAVSSSEASTQKMKALGIPVYDLNSVDRLSVYVDGADEINDHMDMIKGGGAALTREKIVAAVAEKFICIVDNTKQVDILGEFPLPVEVIPMARSYVARQLVKLGGDPVYREGVVTDNGNVILDVYNLKILNPKELESQINEIVGVVTNGLFAKRGADVLLVGTPDGVKTFTAK</sequence>
<protein>
    <recommendedName>
        <fullName evidence="1">Ribose-5-phosphate isomerase A</fullName>
        <ecNumber evidence="1">5.3.1.6</ecNumber>
    </recommendedName>
    <alternativeName>
        <fullName evidence="1">Phosphoriboisomerase A</fullName>
        <shortName evidence="1">PRI</shortName>
    </alternativeName>
</protein>
<proteinExistence type="inferred from homology"/>
<reference key="1">
    <citation type="submission" date="2007-07" db="EMBL/GenBank/DDBJ databases">
        <title>Complete sequence of chromosome of Shewanella baltica OS185.</title>
        <authorList>
            <consortium name="US DOE Joint Genome Institute"/>
            <person name="Copeland A."/>
            <person name="Lucas S."/>
            <person name="Lapidus A."/>
            <person name="Barry K."/>
            <person name="Glavina del Rio T."/>
            <person name="Dalin E."/>
            <person name="Tice H."/>
            <person name="Pitluck S."/>
            <person name="Sims D."/>
            <person name="Brettin T."/>
            <person name="Bruce D."/>
            <person name="Detter J.C."/>
            <person name="Han C."/>
            <person name="Schmutz J."/>
            <person name="Larimer F."/>
            <person name="Land M."/>
            <person name="Hauser L."/>
            <person name="Kyrpides N."/>
            <person name="Mikhailova N."/>
            <person name="Brettar I."/>
            <person name="Rodrigues J."/>
            <person name="Konstantinidis K."/>
            <person name="Tiedje J."/>
            <person name="Richardson P."/>
        </authorList>
    </citation>
    <scope>NUCLEOTIDE SEQUENCE [LARGE SCALE GENOMIC DNA]</scope>
    <source>
        <strain>OS185</strain>
    </source>
</reference>